<proteinExistence type="evidence at transcript level"/>
<accession>Q9D8U0</accession>
<accession>Q7TSB3</accession>
<accession>Q9CW96</accession>
<comment type="function">
    <text evidence="1 2">Ribosome-binding protein that acts as an inhibitor of mRNA translation by promoting ribosome inactivation (By similarity). Associates with the P- and E-sites of the ribosome and inserts a C-terminal helix into the mRNA exit channel to preclude translation (By similarity).</text>
</comment>
<comment type="subunit">
    <text evidence="2">Associates with ribosomes; promoting ribosome inactivation.</text>
</comment>
<comment type="similarity">
    <text evidence="4">Belongs to the IFRD family.</text>
</comment>
<reference key="1">
    <citation type="submission" date="2003-05" db="EMBL/GenBank/DDBJ databases">
        <authorList>
            <person name="Vadivelu S.K."/>
            <person name="Vietor I."/>
            <person name="Huber L.A."/>
        </authorList>
    </citation>
    <scope>NUCLEOTIDE SEQUENCE [MRNA]</scope>
</reference>
<reference key="2">
    <citation type="journal article" date="2005" name="Science">
        <title>The transcriptional landscape of the mammalian genome.</title>
        <authorList>
            <person name="Carninci P."/>
            <person name="Kasukawa T."/>
            <person name="Katayama S."/>
            <person name="Gough J."/>
            <person name="Frith M.C."/>
            <person name="Maeda N."/>
            <person name="Oyama R."/>
            <person name="Ravasi T."/>
            <person name="Lenhard B."/>
            <person name="Wells C."/>
            <person name="Kodzius R."/>
            <person name="Shimokawa K."/>
            <person name="Bajic V.B."/>
            <person name="Brenner S.E."/>
            <person name="Batalov S."/>
            <person name="Forrest A.R."/>
            <person name="Zavolan M."/>
            <person name="Davis M.J."/>
            <person name="Wilming L.G."/>
            <person name="Aidinis V."/>
            <person name="Allen J.E."/>
            <person name="Ambesi-Impiombato A."/>
            <person name="Apweiler R."/>
            <person name="Aturaliya R.N."/>
            <person name="Bailey T.L."/>
            <person name="Bansal M."/>
            <person name="Baxter L."/>
            <person name="Beisel K.W."/>
            <person name="Bersano T."/>
            <person name="Bono H."/>
            <person name="Chalk A.M."/>
            <person name="Chiu K.P."/>
            <person name="Choudhary V."/>
            <person name="Christoffels A."/>
            <person name="Clutterbuck D.R."/>
            <person name="Crowe M.L."/>
            <person name="Dalla E."/>
            <person name="Dalrymple B.P."/>
            <person name="de Bono B."/>
            <person name="Della Gatta G."/>
            <person name="di Bernardo D."/>
            <person name="Down T."/>
            <person name="Engstrom P."/>
            <person name="Fagiolini M."/>
            <person name="Faulkner G."/>
            <person name="Fletcher C.F."/>
            <person name="Fukushima T."/>
            <person name="Furuno M."/>
            <person name="Futaki S."/>
            <person name="Gariboldi M."/>
            <person name="Georgii-Hemming P."/>
            <person name="Gingeras T.R."/>
            <person name="Gojobori T."/>
            <person name="Green R.E."/>
            <person name="Gustincich S."/>
            <person name="Harbers M."/>
            <person name="Hayashi Y."/>
            <person name="Hensch T.K."/>
            <person name="Hirokawa N."/>
            <person name="Hill D."/>
            <person name="Huminiecki L."/>
            <person name="Iacono M."/>
            <person name="Ikeo K."/>
            <person name="Iwama A."/>
            <person name="Ishikawa T."/>
            <person name="Jakt M."/>
            <person name="Kanapin A."/>
            <person name="Katoh M."/>
            <person name="Kawasawa Y."/>
            <person name="Kelso J."/>
            <person name="Kitamura H."/>
            <person name="Kitano H."/>
            <person name="Kollias G."/>
            <person name="Krishnan S.P."/>
            <person name="Kruger A."/>
            <person name="Kummerfeld S.K."/>
            <person name="Kurochkin I.V."/>
            <person name="Lareau L.F."/>
            <person name="Lazarevic D."/>
            <person name="Lipovich L."/>
            <person name="Liu J."/>
            <person name="Liuni S."/>
            <person name="McWilliam S."/>
            <person name="Madan Babu M."/>
            <person name="Madera M."/>
            <person name="Marchionni L."/>
            <person name="Matsuda H."/>
            <person name="Matsuzawa S."/>
            <person name="Miki H."/>
            <person name="Mignone F."/>
            <person name="Miyake S."/>
            <person name="Morris K."/>
            <person name="Mottagui-Tabar S."/>
            <person name="Mulder N."/>
            <person name="Nakano N."/>
            <person name="Nakauchi H."/>
            <person name="Ng P."/>
            <person name="Nilsson R."/>
            <person name="Nishiguchi S."/>
            <person name="Nishikawa S."/>
            <person name="Nori F."/>
            <person name="Ohara O."/>
            <person name="Okazaki Y."/>
            <person name="Orlando V."/>
            <person name="Pang K.C."/>
            <person name="Pavan W.J."/>
            <person name="Pavesi G."/>
            <person name="Pesole G."/>
            <person name="Petrovsky N."/>
            <person name="Piazza S."/>
            <person name="Reed J."/>
            <person name="Reid J.F."/>
            <person name="Ring B.Z."/>
            <person name="Ringwald M."/>
            <person name="Rost B."/>
            <person name="Ruan Y."/>
            <person name="Salzberg S.L."/>
            <person name="Sandelin A."/>
            <person name="Schneider C."/>
            <person name="Schoenbach C."/>
            <person name="Sekiguchi K."/>
            <person name="Semple C.A."/>
            <person name="Seno S."/>
            <person name="Sessa L."/>
            <person name="Sheng Y."/>
            <person name="Shibata Y."/>
            <person name="Shimada H."/>
            <person name="Shimada K."/>
            <person name="Silva D."/>
            <person name="Sinclair B."/>
            <person name="Sperling S."/>
            <person name="Stupka E."/>
            <person name="Sugiura K."/>
            <person name="Sultana R."/>
            <person name="Takenaka Y."/>
            <person name="Taki K."/>
            <person name="Tammoja K."/>
            <person name="Tan S.L."/>
            <person name="Tang S."/>
            <person name="Taylor M.S."/>
            <person name="Tegner J."/>
            <person name="Teichmann S.A."/>
            <person name="Ueda H.R."/>
            <person name="van Nimwegen E."/>
            <person name="Verardo R."/>
            <person name="Wei C.L."/>
            <person name="Yagi K."/>
            <person name="Yamanishi H."/>
            <person name="Zabarovsky E."/>
            <person name="Zhu S."/>
            <person name="Zimmer A."/>
            <person name="Hide W."/>
            <person name="Bult C."/>
            <person name="Grimmond S.M."/>
            <person name="Teasdale R.D."/>
            <person name="Liu E.T."/>
            <person name="Brusic V."/>
            <person name="Quackenbush J."/>
            <person name="Wahlestedt C."/>
            <person name="Mattick J.S."/>
            <person name="Hume D.A."/>
            <person name="Kai C."/>
            <person name="Sasaki D."/>
            <person name="Tomaru Y."/>
            <person name="Fukuda S."/>
            <person name="Kanamori-Katayama M."/>
            <person name="Suzuki M."/>
            <person name="Aoki J."/>
            <person name="Arakawa T."/>
            <person name="Iida J."/>
            <person name="Imamura K."/>
            <person name="Itoh M."/>
            <person name="Kato T."/>
            <person name="Kawaji H."/>
            <person name="Kawagashira N."/>
            <person name="Kawashima T."/>
            <person name="Kojima M."/>
            <person name="Kondo S."/>
            <person name="Konno H."/>
            <person name="Nakano K."/>
            <person name="Ninomiya N."/>
            <person name="Nishio T."/>
            <person name="Okada M."/>
            <person name="Plessy C."/>
            <person name="Shibata K."/>
            <person name="Shiraki T."/>
            <person name="Suzuki S."/>
            <person name="Tagami M."/>
            <person name="Waki K."/>
            <person name="Watahiki A."/>
            <person name="Okamura-Oho Y."/>
            <person name="Suzuki H."/>
            <person name="Kawai J."/>
            <person name="Hayashizaki Y."/>
        </authorList>
    </citation>
    <scope>NUCLEOTIDE SEQUENCE [LARGE SCALE MRNA]</scope>
    <source>
        <strain>C57BL/6J</strain>
        <tissue>Kidney</tissue>
        <tissue>Liver</tissue>
        <tissue>Lung</tissue>
        <tissue>Mammary gland</tissue>
        <tissue>Pancreas</tissue>
    </source>
</reference>
<reference key="3">
    <citation type="journal article" date="2004" name="Genome Res.">
        <title>The status, quality, and expansion of the NIH full-length cDNA project: the Mammalian Gene Collection (MGC).</title>
        <authorList>
            <consortium name="The MGC Project Team"/>
        </authorList>
    </citation>
    <scope>NUCLEOTIDE SEQUENCE [LARGE SCALE MRNA]</scope>
    <source>
        <strain>Czech II</strain>
    </source>
</reference>
<reference key="4">
    <citation type="journal article" date="2009" name="PLoS Biol.">
        <title>Lineage-specific biology revealed by a finished genome assembly of the mouse.</title>
        <authorList>
            <person name="Church D.M."/>
            <person name="Goodstadt L."/>
            <person name="Hillier L.W."/>
            <person name="Zody M.C."/>
            <person name="Goldstein S."/>
            <person name="She X."/>
            <person name="Bult C.J."/>
            <person name="Agarwala R."/>
            <person name="Cherry J.L."/>
            <person name="DiCuccio M."/>
            <person name="Hlavina W."/>
            <person name="Kapustin Y."/>
            <person name="Meric P."/>
            <person name="Maglott D."/>
            <person name="Birtle Z."/>
            <person name="Marques A.C."/>
            <person name="Graves T."/>
            <person name="Zhou S."/>
            <person name="Teague B."/>
            <person name="Potamousis K."/>
            <person name="Churas C."/>
            <person name="Place M."/>
            <person name="Herschleb J."/>
            <person name="Runnheim R."/>
            <person name="Forrest D."/>
            <person name="Amos-Landgraf J."/>
            <person name="Schwartz D.C."/>
            <person name="Cheng Z."/>
            <person name="Lindblad-Toh K."/>
            <person name="Eichler E.E."/>
            <person name="Ponting C.P."/>
        </authorList>
    </citation>
    <scope>NUCLEOTIDE SEQUENCE [LARGE SCALE GENOMIC DNA]</scope>
    <source>
        <strain>C57BL/6J</strain>
    </source>
</reference>
<evidence type="ECO:0000250" key="1">
    <source>
        <dbReference type="UniProtKB" id="P0DX19"/>
    </source>
</evidence>
<evidence type="ECO:0000250" key="2">
    <source>
        <dbReference type="UniProtKB" id="Q12894"/>
    </source>
</evidence>
<evidence type="ECO:0000256" key="3">
    <source>
        <dbReference type="SAM" id="MobiDB-lite"/>
    </source>
</evidence>
<evidence type="ECO:0000305" key="4"/>
<evidence type="ECO:0000312" key="5">
    <source>
        <dbReference type="MGI" id="MGI:1316708"/>
    </source>
</evidence>
<sequence>MPRARKGNALRKGGQRRGGGARSSTQADSGSSEDEAASEARSTTSDCPSLLSATTEDCLGGEAVDEQSQQENLEEKLKGYVDCLTDKSAKTRQGALESLRLALASRLLPDFLLERSLTLADALEKCLKKGKGEEQALAAAVLGILCVQLGPGPKGEELFRSLQPLLISVLSDSTASPTARLHCASALGLGCYVAATDVQDLVSCLACLEGVFSWSCGTSGSAASLVPASLHGLLCAALQAWALLLTICPGTHISHILDRQLPRLPQLLSSESVNLRIAAGEAIALLFELARDLEEDFVYEDMEALCGSLRTLATDSNKYRAKVDRRRQRSIFRAVLHFVEGGECEEETVRFGLEVLYIDSWARHRIYTAFKDVLGSGIHYHLQNNELLRDIFGLGPVLVLDAAALKACKISRFEKHLYNAAAFKARTKARSRARDKRADIL</sequence>
<name>IFRD2_MOUSE</name>
<keyword id="KW-1185">Reference proteome</keyword>
<keyword id="KW-0810">Translation regulation</keyword>
<protein>
    <recommendedName>
        <fullName evidence="4">Interferon-related developmental regulator 2</fullName>
    </recommendedName>
</protein>
<organism>
    <name type="scientific">Mus musculus</name>
    <name type="common">Mouse</name>
    <dbReference type="NCBI Taxonomy" id="10090"/>
    <lineage>
        <taxon>Eukaryota</taxon>
        <taxon>Metazoa</taxon>
        <taxon>Chordata</taxon>
        <taxon>Craniata</taxon>
        <taxon>Vertebrata</taxon>
        <taxon>Euteleostomi</taxon>
        <taxon>Mammalia</taxon>
        <taxon>Eutheria</taxon>
        <taxon>Euarchontoglires</taxon>
        <taxon>Glires</taxon>
        <taxon>Rodentia</taxon>
        <taxon>Myomorpha</taxon>
        <taxon>Muroidea</taxon>
        <taxon>Muridae</taxon>
        <taxon>Murinae</taxon>
        <taxon>Mus</taxon>
        <taxon>Mus</taxon>
    </lineage>
</organism>
<dbReference type="EMBL" id="AY298860">
    <property type="protein sequence ID" value="AAP56349.1"/>
    <property type="molecule type" value="mRNA"/>
</dbReference>
<dbReference type="EMBL" id="AK002702">
    <property type="protein sequence ID" value="BAB22296.1"/>
    <property type="molecule type" value="mRNA"/>
</dbReference>
<dbReference type="EMBL" id="AK007687">
    <property type="protein sequence ID" value="BAB25191.1"/>
    <property type="molecule type" value="mRNA"/>
</dbReference>
<dbReference type="EMBL" id="AK149496">
    <property type="protein sequence ID" value="BAE28919.1"/>
    <property type="molecule type" value="mRNA"/>
</dbReference>
<dbReference type="EMBL" id="AK166130">
    <property type="protein sequence ID" value="BAE38588.1"/>
    <property type="molecule type" value="mRNA"/>
</dbReference>
<dbReference type="EMBL" id="AK166258">
    <property type="protein sequence ID" value="BAE38666.1"/>
    <property type="molecule type" value="mRNA"/>
</dbReference>
<dbReference type="EMBL" id="BC037434">
    <property type="protein sequence ID" value="AAH37434.1"/>
    <property type="molecule type" value="mRNA"/>
</dbReference>
<dbReference type="CCDS" id="CCDS23500.1"/>
<dbReference type="RefSeq" id="NP_080179.1">
    <property type="nucleotide sequence ID" value="NM_025903.2"/>
</dbReference>
<dbReference type="SMR" id="Q9D8U0"/>
<dbReference type="FunCoup" id="Q9D8U0">
    <property type="interactions" value="1258"/>
</dbReference>
<dbReference type="STRING" id="10090.ENSMUSP00000010192"/>
<dbReference type="iPTMnet" id="Q9D8U0"/>
<dbReference type="PhosphoSitePlus" id="Q9D8U0"/>
<dbReference type="PaxDb" id="10090-ENSMUSP00000010192"/>
<dbReference type="ProteomicsDB" id="331104"/>
<dbReference type="Antibodypedia" id="7285">
    <property type="antibodies" value="163 antibodies from 25 providers"/>
</dbReference>
<dbReference type="DNASU" id="15983"/>
<dbReference type="Ensembl" id="ENSMUST00000010192.11">
    <property type="protein sequence ID" value="ENSMUSP00000010192.6"/>
    <property type="gene ID" value="ENSMUSG00000010048.11"/>
</dbReference>
<dbReference type="GeneID" id="15983"/>
<dbReference type="KEGG" id="mmu:15983"/>
<dbReference type="UCSC" id="uc009rmd.1">
    <property type="organism name" value="mouse"/>
</dbReference>
<dbReference type="AGR" id="MGI:1316708"/>
<dbReference type="CTD" id="7866"/>
<dbReference type="MGI" id="MGI:1316708">
    <property type="gene designation" value="Ifrd2"/>
</dbReference>
<dbReference type="VEuPathDB" id="HostDB:ENSMUSG00000010048"/>
<dbReference type="eggNOG" id="KOG2842">
    <property type="taxonomic scope" value="Eukaryota"/>
</dbReference>
<dbReference type="GeneTree" id="ENSGT00390000013347"/>
<dbReference type="HOGENOM" id="CLU_031384_1_2_1"/>
<dbReference type="InParanoid" id="Q9D8U0"/>
<dbReference type="OMA" id="QCFEAIF"/>
<dbReference type="OrthoDB" id="18978at2759"/>
<dbReference type="TreeFam" id="TF313638"/>
<dbReference type="BioGRID-ORCS" id="15983">
    <property type="hits" value="1 hit in 77 CRISPR screens"/>
</dbReference>
<dbReference type="ChiTaRS" id="Ifrd2">
    <property type="organism name" value="mouse"/>
</dbReference>
<dbReference type="PRO" id="PR:Q9D8U0"/>
<dbReference type="Proteomes" id="UP000000589">
    <property type="component" value="Chromosome 9"/>
</dbReference>
<dbReference type="RNAct" id="Q9D8U0">
    <property type="molecule type" value="protein"/>
</dbReference>
<dbReference type="Bgee" id="ENSMUSG00000010048">
    <property type="expression patterns" value="Expressed in fetal liver hematopoietic progenitor cell and 222 other cell types or tissues"/>
</dbReference>
<dbReference type="ExpressionAtlas" id="Q9D8U0">
    <property type="expression patterns" value="baseline and differential"/>
</dbReference>
<dbReference type="GO" id="GO:0043022">
    <property type="term" value="F:ribosome binding"/>
    <property type="evidence" value="ECO:0000250"/>
    <property type="project" value="UniProtKB"/>
</dbReference>
<dbReference type="GO" id="GO:0030371">
    <property type="term" value="F:translation repressor activity"/>
    <property type="evidence" value="ECO:0000250"/>
    <property type="project" value="UniProtKB"/>
</dbReference>
<dbReference type="GO" id="GO:0060612">
    <property type="term" value="P:adipose tissue development"/>
    <property type="evidence" value="ECO:0000315"/>
    <property type="project" value="MGI"/>
</dbReference>
<dbReference type="GO" id="GO:0045444">
    <property type="term" value="P:fat cell differentiation"/>
    <property type="evidence" value="ECO:0000315"/>
    <property type="project" value="MGI"/>
</dbReference>
<dbReference type="GO" id="GO:0017148">
    <property type="term" value="P:negative regulation of translation"/>
    <property type="evidence" value="ECO:0000250"/>
    <property type="project" value="UniProtKB"/>
</dbReference>
<dbReference type="GO" id="GO:0006417">
    <property type="term" value="P:regulation of translation"/>
    <property type="evidence" value="ECO:0000315"/>
    <property type="project" value="MGI"/>
</dbReference>
<dbReference type="GO" id="GO:0016055">
    <property type="term" value="P:Wnt signaling pathway"/>
    <property type="evidence" value="ECO:0000315"/>
    <property type="project" value="MGI"/>
</dbReference>
<dbReference type="Gene3D" id="1.25.10.10">
    <property type="entry name" value="Leucine-rich Repeat Variant"/>
    <property type="match status" value="1"/>
</dbReference>
<dbReference type="InterPro" id="IPR011989">
    <property type="entry name" value="ARM-like"/>
</dbReference>
<dbReference type="InterPro" id="IPR016024">
    <property type="entry name" value="ARM-type_fold"/>
</dbReference>
<dbReference type="InterPro" id="IPR039777">
    <property type="entry name" value="IFRD"/>
</dbReference>
<dbReference type="InterPro" id="IPR006921">
    <property type="entry name" value="Interferon-rel_develop_reg_C"/>
</dbReference>
<dbReference type="InterPro" id="IPR007701">
    <property type="entry name" value="Interferon-rel_develop_reg_N"/>
</dbReference>
<dbReference type="PANTHER" id="PTHR12354">
    <property type="entry name" value="INTERFERON-RELATED DEVELOPMENTAL REGULATOR"/>
    <property type="match status" value="1"/>
</dbReference>
<dbReference type="PANTHER" id="PTHR12354:SF8">
    <property type="entry name" value="INTERFERON-RELATED DEVELOPMENTAL REGULATOR 2"/>
    <property type="match status" value="1"/>
</dbReference>
<dbReference type="Pfam" id="PF05004">
    <property type="entry name" value="IFRD"/>
    <property type="match status" value="1"/>
</dbReference>
<dbReference type="Pfam" id="PF04836">
    <property type="entry name" value="IFRD_C"/>
    <property type="match status" value="1"/>
</dbReference>
<dbReference type="SUPFAM" id="SSF48371">
    <property type="entry name" value="ARM repeat"/>
    <property type="match status" value="1"/>
</dbReference>
<feature type="chain" id="PRO_0000458235" description="Interferon-related developmental regulator 2">
    <location>
        <begin position="1"/>
        <end position="441"/>
    </location>
</feature>
<feature type="region of interest" description="Disordered" evidence="3">
    <location>
        <begin position="1"/>
        <end position="51"/>
    </location>
</feature>
<feature type="compositionally biased region" description="Basic residues" evidence="3">
    <location>
        <begin position="1"/>
        <end position="15"/>
    </location>
</feature>
<feature type="sequence conflict" description="In Ref. 1; AAP56349." evidence="4" ref="1">
    <original>A</original>
    <variation>T</variation>
    <location>
        <position position="53"/>
    </location>
</feature>
<feature type="sequence conflict" description="In Ref. 1; AAP56349." evidence="4" ref="1">
    <original>V</original>
    <variation>G</variation>
    <location>
        <position position="141"/>
    </location>
</feature>
<feature type="sequence conflict" description="In Ref. 1; AAP56349." evidence="4" ref="1">
    <original>C</original>
    <variation>W</variation>
    <location>
        <position position="146"/>
    </location>
</feature>
<gene>
    <name evidence="5" type="primary">Ifrd2</name>
</gene>